<sequence>MRVDGREVRELRHVHIHTNYLKHPEGSVLIEVGDTKVICSATVEERVPPFMRGEGKGWVTAEYAMIPRATEQRTIRESSKGKVTGRTMEIQRLIGRALRAVVDLEVLGERTVWIDCDVIQADGGTRTASITGAYVAMVLAFEKLLQAEKVTKIPVKDYLAATSVGILEEQGVVLDLNYAEDSKADVDMNVIMTGKGHFVEVQGTGEEATFSRAQLNELLDAAEHGILQLIEKQKEALGDIVSHIE</sequence>
<keyword id="KW-0548">Nucleotidyltransferase</keyword>
<keyword id="KW-0694">RNA-binding</keyword>
<keyword id="KW-0698">rRNA processing</keyword>
<keyword id="KW-0808">Transferase</keyword>
<keyword id="KW-0819">tRNA processing</keyword>
<keyword id="KW-0820">tRNA-binding</keyword>
<gene>
    <name evidence="1" type="primary">rph</name>
    <name type="ordered locus">Bcer98_3202</name>
</gene>
<evidence type="ECO:0000255" key="1">
    <source>
        <dbReference type="HAMAP-Rule" id="MF_00564"/>
    </source>
</evidence>
<comment type="function">
    <text evidence="1">Phosphorolytic 3'-5' exoribonuclease that plays an important role in tRNA 3'-end maturation. Removes nucleotide residues following the 3'-CCA terminus of tRNAs; can also add nucleotides to the ends of RNA molecules by using nucleoside diphosphates as substrates, but this may not be physiologically important. Probably plays a role in initiation of 16S rRNA degradation (leading to ribosome degradation) during starvation.</text>
</comment>
<comment type="catalytic activity">
    <reaction evidence="1">
        <text>tRNA(n+1) + phosphate = tRNA(n) + a ribonucleoside 5'-diphosphate</text>
        <dbReference type="Rhea" id="RHEA:10628"/>
        <dbReference type="Rhea" id="RHEA-COMP:17343"/>
        <dbReference type="Rhea" id="RHEA-COMP:17344"/>
        <dbReference type="ChEBI" id="CHEBI:43474"/>
        <dbReference type="ChEBI" id="CHEBI:57930"/>
        <dbReference type="ChEBI" id="CHEBI:173114"/>
        <dbReference type="EC" id="2.7.7.56"/>
    </reaction>
</comment>
<comment type="subunit">
    <text evidence="1">Homohexameric ring arranged as a trimer of dimers.</text>
</comment>
<comment type="similarity">
    <text evidence="1">Belongs to the RNase PH family.</text>
</comment>
<proteinExistence type="inferred from homology"/>
<dbReference type="EC" id="2.7.7.56" evidence="1"/>
<dbReference type="EMBL" id="CP000764">
    <property type="protein sequence ID" value="ABS23424.1"/>
    <property type="molecule type" value="Genomic_DNA"/>
</dbReference>
<dbReference type="RefSeq" id="WP_012095663.1">
    <property type="nucleotide sequence ID" value="NC_009674.1"/>
</dbReference>
<dbReference type="SMR" id="A7GTG6"/>
<dbReference type="STRING" id="315749.Bcer98_3202"/>
<dbReference type="GeneID" id="33898451"/>
<dbReference type="KEGG" id="bcy:Bcer98_3202"/>
<dbReference type="eggNOG" id="COG0689">
    <property type="taxonomic scope" value="Bacteria"/>
</dbReference>
<dbReference type="HOGENOM" id="CLU_050858_0_0_9"/>
<dbReference type="OrthoDB" id="9802265at2"/>
<dbReference type="Proteomes" id="UP000002300">
    <property type="component" value="Chromosome"/>
</dbReference>
<dbReference type="GO" id="GO:0000175">
    <property type="term" value="F:3'-5'-RNA exonuclease activity"/>
    <property type="evidence" value="ECO:0007669"/>
    <property type="project" value="UniProtKB-UniRule"/>
</dbReference>
<dbReference type="GO" id="GO:0000049">
    <property type="term" value="F:tRNA binding"/>
    <property type="evidence" value="ECO:0007669"/>
    <property type="project" value="UniProtKB-UniRule"/>
</dbReference>
<dbReference type="GO" id="GO:0009022">
    <property type="term" value="F:tRNA nucleotidyltransferase activity"/>
    <property type="evidence" value="ECO:0007669"/>
    <property type="project" value="UniProtKB-UniRule"/>
</dbReference>
<dbReference type="GO" id="GO:0016075">
    <property type="term" value="P:rRNA catabolic process"/>
    <property type="evidence" value="ECO:0007669"/>
    <property type="project" value="UniProtKB-UniRule"/>
</dbReference>
<dbReference type="GO" id="GO:0006364">
    <property type="term" value="P:rRNA processing"/>
    <property type="evidence" value="ECO:0007669"/>
    <property type="project" value="UniProtKB-KW"/>
</dbReference>
<dbReference type="GO" id="GO:0008033">
    <property type="term" value="P:tRNA processing"/>
    <property type="evidence" value="ECO:0007669"/>
    <property type="project" value="UniProtKB-UniRule"/>
</dbReference>
<dbReference type="CDD" id="cd11362">
    <property type="entry name" value="RNase_PH_bact"/>
    <property type="match status" value="1"/>
</dbReference>
<dbReference type="FunFam" id="3.30.230.70:FF:000003">
    <property type="entry name" value="Ribonuclease PH"/>
    <property type="match status" value="1"/>
</dbReference>
<dbReference type="Gene3D" id="3.30.230.70">
    <property type="entry name" value="GHMP Kinase, N-terminal domain"/>
    <property type="match status" value="1"/>
</dbReference>
<dbReference type="HAMAP" id="MF_00564">
    <property type="entry name" value="RNase_PH"/>
    <property type="match status" value="1"/>
</dbReference>
<dbReference type="InterPro" id="IPR001247">
    <property type="entry name" value="ExoRNase_PH_dom1"/>
</dbReference>
<dbReference type="InterPro" id="IPR015847">
    <property type="entry name" value="ExoRNase_PH_dom2"/>
</dbReference>
<dbReference type="InterPro" id="IPR036345">
    <property type="entry name" value="ExoRNase_PH_dom2_sf"/>
</dbReference>
<dbReference type="InterPro" id="IPR027408">
    <property type="entry name" value="PNPase/RNase_PH_dom_sf"/>
</dbReference>
<dbReference type="InterPro" id="IPR020568">
    <property type="entry name" value="Ribosomal_Su5_D2-typ_SF"/>
</dbReference>
<dbReference type="InterPro" id="IPR050080">
    <property type="entry name" value="RNase_PH"/>
</dbReference>
<dbReference type="InterPro" id="IPR002381">
    <property type="entry name" value="RNase_PH_bac-type"/>
</dbReference>
<dbReference type="InterPro" id="IPR018336">
    <property type="entry name" value="RNase_PH_CS"/>
</dbReference>
<dbReference type="NCBIfam" id="TIGR01966">
    <property type="entry name" value="RNasePH"/>
    <property type="match status" value="1"/>
</dbReference>
<dbReference type="PANTHER" id="PTHR11953">
    <property type="entry name" value="EXOSOME COMPLEX COMPONENT"/>
    <property type="match status" value="1"/>
</dbReference>
<dbReference type="PANTHER" id="PTHR11953:SF0">
    <property type="entry name" value="EXOSOME COMPLEX COMPONENT RRP41"/>
    <property type="match status" value="1"/>
</dbReference>
<dbReference type="Pfam" id="PF01138">
    <property type="entry name" value="RNase_PH"/>
    <property type="match status" value="1"/>
</dbReference>
<dbReference type="Pfam" id="PF03725">
    <property type="entry name" value="RNase_PH_C"/>
    <property type="match status" value="1"/>
</dbReference>
<dbReference type="SUPFAM" id="SSF55666">
    <property type="entry name" value="Ribonuclease PH domain 2-like"/>
    <property type="match status" value="1"/>
</dbReference>
<dbReference type="SUPFAM" id="SSF54211">
    <property type="entry name" value="Ribosomal protein S5 domain 2-like"/>
    <property type="match status" value="1"/>
</dbReference>
<dbReference type="PROSITE" id="PS01277">
    <property type="entry name" value="RIBONUCLEASE_PH"/>
    <property type="match status" value="1"/>
</dbReference>
<feature type="chain" id="PRO_1000082282" description="Ribonuclease PH">
    <location>
        <begin position="1"/>
        <end position="245"/>
    </location>
</feature>
<feature type="binding site" evidence="1">
    <location>
        <position position="86"/>
    </location>
    <ligand>
        <name>phosphate</name>
        <dbReference type="ChEBI" id="CHEBI:43474"/>
        <note>substrate</note>
    </ligand>
</feature>
<feature type="binding site" evidence="1">
    <location>
        <begin position="124"/>
        <end position="126"/>
    </location>
    <ligand>
        <name>phosphate</name>
        <dbReference type="ChEBI" id="CHEBI:43474"/>
        <note>substrate</note>
    </ligand>
</feature>
<reference key="1">
    <citation type="journal article" date="2008" name="Chem. Biol. Interact.">
        <title>Extending the Bacillus cereus group genomics to putative food-borne pathogens of different toxicity.</title>
        <authorList>
            <person name="Lapidus A."/>
            <person name="Goltsman E."/>
            <person name="Auger S."/>
            <person name="Galleron N."/>
            <person name="Segurens B."/>
            <person name="Dossat C."/>
            <person name="Land M.L."/>
            <person name="Broussolle V."/>
            <person name="Brillard J."/>
            <person name="Guinebretiere M.-H."/>
            <person name="Sanchis V."/>
            <person name="Nguen-the C."/>
            <person name="Lereclus D."/>
            <person name="Richardson P."/>
            <person name="Wincker P."/>
            <person name="Weissenbach J."/>
            <person name="Ehrlich S.D."/>
            <person name="Sorokin A."/>
        </authorList>
    </citation>
    <scope>NUCLEOTIDE SEQUENCE [LARGE SCALE GENOMIC DNA]</scope>
    <source>
        <strain>DSM 22905 / CIP 110041 / 391-98 / NVH 391-98</strain>
    </source>
</reference>
<protein>
    <recommendedName>
        <fullName evidence="1">Ribonuclease PH</fullName>
        <shortName evidence="1">RNase PH</shortName>
        <ecNumber evidence="1">2.7.7.56</ecNumber>
    </recommendedName>
    <alternativeName>
        <fullName evidence="1">tRNA nucleotidyltransferase</fullName>
    </alternativeName>
</protein>
<accession>A7GTG6</accession>
<organism>
    <name type="scientific">Bacillus cytotoxicus (strain DSM 22905 / CIP 110041 / 391-98 / NVH 391-98)</name>
    <dbReference type="NCBI Taxonomy" id="315749"/>
    <lineage>
        <taxon>Bacteria</taxon>
        <taxon>Bacillati</taxon>
        <taxon>Bacillota</taxon>
        <taxon>Bacilli</taxon>
        <taxon>Bacillales</taxon>
        <taxon>Bacillaceae</taxon>
        <taxon>Bacillus</taxon>
        <taxon>Bacillus cereus group</taxon>
    </lineage>
</organism>
<name>RNPH_BACCN</name>